<keyword id="KW-0028">Amino-acid biosynthesis</keyword>
<keyword id="KW-0055">Arginine biosynthesis</keyword>
<keyword id="KW-0963">Cytoplasm</keyword>
<keyword id="KW-0521">NADP</keyword>
<keyword id="KW-0560">Oxidoreductase</keyword>
<keyword id="KW-1185">Reference proteome</keyword>
<comment type="function">
    <text evidence="1">Catalyzes the NADPH-dependent reduction of N-acetyl-5-glutamyl phosphate to yield N-acetyl-L-glutamate 5-semialdehyde.</text>
</comment>
<comment type="catalytic activity">
    <reaction evidence="1">
        <text>N-acetyl-L-glutamate 5-semialdehyde + phosphate + NADP(+) = N-acetyl-L-glutamyl 5-phosphate + NADPH + H(+)</text>
        <dbReference type="Rhea" id="RHEA:21588"/>
        <dbReference type="ChEBI" id="CHEBI:15378"/>
        <dbReference type="ChEBI" id="CHEBI:29123"/>
        <dbReference type="ChEBI" id="CHEBI:43474"/>
        <dbReference type="ChEBI" id="CHEBI:57783"/>
        <dbReference type="ChEBI" id="CHEBI:57936"/>
        <dbReference type="ChEBI" id="CHEBI:58349"/>
        <dbReference type="EC" id="1.2.1.38"/>
    </reaction>
</comment>
<comment type="pathway">
    <text evidence="1">Amino-acid biosynthesis; L-arginine biosynthesis; N(2)-acetyl-L-ornithine from L-glutamate: step 3/4.</text>
</comment>
<comment type="subcellular location">
    <subcellularLocation>
        <location evidence="1">Cytoplasm</location>
    </subcellularLocation>
</comment>
<comment type="similarity">
    <text evidence="1">Belongs to the NAGSA dehydrogenase family. Type 1 subfamily.</text>
</comment>
<sequence length="348" mass="37522">MIKAGIVGGTGYTGVELLRLLAKHPQVEVSVITSRAEAGVKVADLFPNLRGHVDLAFTEPDVNILGQCDVVFFATPHGVAQNMMPVLMKTGTRIVDLSADFRIRDVPLWEKWYGQTHGAPDLVSQAVYGLPEVNRDAIRSAKLVACPGCYPTATQLGFLPLIENNLVDPSRLIANAASGASGAGRQAKIDNLLMEISDSFKAYGVKGHRHLPEIEQGLRDVQPAGVAAAQLTFVPHLLPIIRGIHATLYATLLDVNQVPDLQSLYQQRYANEPFVDVLPAGEMPQTRSVKGSNVCRISVFRPQARDTVVVLSVIDNLTKGASGQAIQNMNIMFGFDETAGLDVVALLP</sequence>
<proteinExistence type="inferred from homology"/>
<name>ARGC_CELJU</name>
<feature type="chain" id="PRO_1000096718" description="N-acetyl-gamma-glutamyl-phosphate reductase">
    <location>
        <begin position="1"/>
        <end position="348"/>
    </location>
</feature>
<feature type="active site" evidence="1">
    <location>
        <position position="149"/>
    </location>
</feature>
<protein>
    <recommendedName>
        <fullName evidence="1">N-acetyl-gamma-glutamyl-phosphate reductase</fullName>
        <shortName evidence="1">AGPR</shortName>
        <ecNumber evidence="1">1.2.1.38</ecNumber>
    </recommendedName>
    <alternativeName>
        <fullName evidence="1">N-acetyl-glutamate semialdehyde dehydrogenase</fullName>
        <shortName evidence="1">NAGSA dehydrogenase</shortName>
    </alternativeName>
</protein>
<organism>
    <name type="scientific">Cellvibrio japonicus (strain Ueda107)</name>
    <name type="common">Pseudomonas fluorescens subsp. cellulosa</name>
    <dbReference type="NCBI Taxonomy" id="498211"/>
    <lineage>
        <taxon>Bacteria</taxon>
        <taxon>Pseudomonadati</taxon>
        <taxon>Pseudomonadota</taxon>
        <taxon>Gammaproteobacteria</taxon>
        <taxon>Cellvibrionales</taxon>
        <taxon>Cellvibrionaceae</taxon>
        <taxon>Cellvibrio</taxon>
    </lineage>
</organism>
<reference key="1">
    <citation type="journal article" date="2008" name="J. Bacteriol.">
        <title>Insights into plant cell wall degradation from the genome sequence of the soil bacterium Cellvibrio japonicus.</title>
        <authorList>
            <person name="DeBoy R.T."/>
            <person name="Mongodin E.F."/>
            <person name="Fouts D.E."/>
            <person name="Tailford L.E."/>
            <person name="Khouri H."/>
            <person name="Emerson J.B."/>
            <person name="Mohamoud Y."/>
            <person name="Watkins K."/>
            <person name="Henrissat B."/>
            <person name="Gilbert H.J."/>
            <person name="Nelson K.E."/>
        </authorList>
    </citation>
    <scope>NUCLEOTIDE SEQUENCE [LARGE SCALE GENOMIC DNA]</scope>
    <source>
        <strain>Ueda107</strain>
    </source>
</reference>
<evidence type="ECO:0000255" key="1">
    <source>
        <dbReference type="HAMAP-Rule" id="MF_00150"/>
    </source>
</evidence>
<dbReference type="EC" id="1.2.1.38" evidence="1"/>
<dbReference type="EMBL" id="CP000934">
    <property type="protein sequence ID" value="ACE82904.1"/>
    <property type="molecule type" value="Genomic_DNA"/>
</dbReference>
<dbReference type="RefSeq" id="WP_012486545.1">
    <property type="nucleotide sequence ID" value="NC_010995.1"/>
</dbReference>
<dbReference type="SMR" id="B3PL73"/>
<dbReference type="STRING" id="498211.CJA_0885"/>
<dbReference type="KEGG" id="cja:CJA_0885"/>
<dbReference type="eggNOG" id="COG0002">
    <property type="taxonomic scope" value="Bacteria"/>
</dbReference>
<dbReference type="HOGENOM" id="CLU_006384_0_1_6"/>
<dbReference type="OrthoDB" id="9801289at2"/>
<dbReference type="UniPathway" id="UPA00068">
    <property type="reaction ID" value="UER00108"/>
</dbReference>
<dbReference type="Proteomes" id="UP000001036">
    <property type="component" value="Chromosome"/>
</dbReference>
<dbReference type="GO" id="GO:0005737">
    <property type="term" value="C:cytoplasm"/>
    <property type="evidence" value="ECO:0007669"/>
    <property type="project" value="UniProtKB-SubCell"/>
</dbReference>
<dbReference type="GO" id="GO:0003942">
    <property type="term" value="F:N-acetyl-gamma-glutamyl-phosphate reductase activity"/>
    <property type="evidence" value="ECO:0007669"/>
    <property type="project" value="UniProtKB-UniRule"/>
</dbReference>
<dbReference type="GO" id="GO:0051287">
    <property type="term" value="F:NAD binding"/>
    <property type="evidence" value="ECO:0007669"/>
    <property type="project" value="InterPro"/>
</dbReference>
<dbReference type="GO" id="GO:0070401">
    <property type="term" value="F:NADP+ binding"/>
    <property type="evidence" value="ECO:0007669"/>
    <property type="project" value="InterPro"/>
</dbReference>
<dbReference type="GO" id="GO:0006526">
    <property type="term" value="P:L-arginine biosynthetic process"/>
    <property type="evidence" value="ECO:0007669"/>
    <property type="project" value="UniProtKB-UniRule"/>
</dbReference>
<dbReference type="CDD" id="cd23934">
    <property type="entry name" value="AGPR_1_C"/>
    <property type="match status" value="1"/>
</dbReference>
<dbReference type="CDD" id="cd17895">
    <property type="entry name" value="AGPR_1_N"/>
    <property type="match status" value="1"/>
</dbReference>
<dbReference type="FunFam" id="3.30.360.10:FF:000014">
    <property type="entry name" value="N-acetyl-gamma-glutamyl-phosphate reductase"/>
    <property type="match status" value="1"/>
</dbReference>
<dbReference type="Gene3D" id="3.30.360.10">
    <property type="entry name" value="Dihydrodipicolinate Reductase, domain 2"/>
    <property type="match status" value="1"/>
</dbReference>
<dbReference type="Gene3D" id="3.40.50.720">
    <property type="entry name" value="NAD(P)-binding Rossmann-like Domain"/>
    <property type="match status" value="1"/>
</dbReference>
<dbReference type="HAMAP" id="MF_00150">
    <property type="entry name" value="ArgC_type1"/>
    <property type="match status" value="1"/>
</dbReference>
<dbReference type="InterPro" id="IPR023013">
    <property type="entry name" value="AGPR_AS"/>
</dbReference>
<dbReference type="InterPro" id="IPR000706">
    <property type="entry name" value="AGPR_type-1"/>
</dbReference>
<dbReference type="InterPro" id="IPR036291">
    <property type="entry name" value="NAD(P)-bd_dom_sf"/>
</dbReference>
<dbReference type="InterPro" id="IPR050085">
    <property type="entry name" value="NAGSA_dehydrogenase"/>
</dbReference>
<dbReference type="InterPro" id="IPR000534">
    <property type="entry name" value="Semialdehyde_DH_NAD-bd"/>
</dbReference>
<dbReference type="NCBIfam" id="TIGR01850">
    <property type="entry name" value="argC"/>
    <property type="match status" value="1"/>
</dbReference>
<dbReference type="PANTHER" id="PTHR32338:SF10">
    <property type="entry name" value="N-ACETYL-GAMMA-GLUTAMYL-PHOSPHATE REDUCTASE, CHLOROPLASTIC-RELATED"/>
    <property type="match status" value="1"/>
</dbReference>
<dbReference type="PANTHER" id="PTHR32338">
    <property type="entry name" value="N-ACETYL-GAMMA-GLUTAMYL-PHOSPHATE REDUCTASE, CHLOROPLASTIC-RELATED-RELATED"/>
    <property type="match status" value="1"/>
</dbReference>
<dbReference type="Pfam" id="PF01118">
    <property type="entry name" value="Semialdhyde_dh"/>
    <property type="match status" value="1"/>
</dbReference>
<dbReference type="Pfam" id="PF22698">
    <property type="entry name" value="Semialdhyde_dhC_1"/>
    <property type="match status" value="1"/>
</dbReference>
<dbReference type="SMART" id="SM00859">
    <property type="entry name" value="Semialdhyde_dh"/>
    <property type="match status" value="1"/>
</dbReference>
<dbReference type="SUPFAM" id="SSF55347">
    <property type="entry name" value="Glyceraldehyde-3-phosphate dehydrogenase-like, C-terminal domain"/>
    <property type="match status" value="1"/>
</dbReference>
<dbReference type="SUPFAM" id="SSF51735">
    <property type="entry name" value="NAD(P)-binding Rossmann-fold domains"/>
    <property type="match status" value="1"/>
</dbReference>
<dbReference type="PROSITE" id="PS01224">
    <property type="entry name" value="ARGC"/>
    <property type="match status" value="1"/>
</dbReference>
<gene>
    <name evidence="1" type="primary">argC</name>
    <name type="ordered locus">CJA_0885</name>
</gene>
<accession>B3PL73</accession>